<dbReference type="EC" id="4.1.99.12" evidence="1"/>
<dbReference type="EMBL" id="CP001657">
    <property type="protein sequence ID" value="ACT11835.1"/>
    <property type="molecule type" value="Genomic_DNA"/>
</dbReference>
<dbReference type="RefSeq" id="WP_012773476.1">
    <property type="nucleotide sequence ID" value="NC_012917.1"/>
</dbReference>
<dbReference type="SMR" id="C6D9P9"/>
<dbReference type="STRING" id="561230.PC1_0781"/>
<dbReference type="GeneID" id="67795413"/>
<dbReference type="KEGG" id="pct:PC1_0781"/>
<dbReference type="eggNOG" id="COG0108">
    <property type="taxonomic scope" value="Bacteria"/>
</dbReference>
<dbReference type="HOGENOM" id="CLU_020273_3_0_6"/>
<dbReference type="OrthoDB" id="9793111at2"/>
<dbReference type="UniPathway" id="UPA00275">
    <property type="reaction ID" value="UER00399"/>
</dbReference>
<dbReference type="Proteomes" id="UP000002736">
    <property type="component" value="Chromosome"/>
</dbReference>
<dbReference type="GO" id="GO:0005829">
    <property type="term" value="C:cytosol"/>
    <property type="evidence" value="ECO:0007669"/>
    <property type="project" value="TreeGrafter"/>
</dbReference>
<dbReference type="GO" id="GO:0008686">
    <property type="term" value="F:3,4-dihydroxy-2-butanone-4-phosphate synthase activity"/>
    <property type="evidence" value="ECO:0007669"/>
    <property type="project" value="UniProtKB-UniRule"/>
</dbReference>
<dbReference type="GO" id="GO:0000287">
    <property type="term" value="F:magnesium ion binding"/>
    <property type="evidence" value="ECO:0007669"/>
    <property type="project" value="UniProtKB-UniRule"/>
</dbReference>
<dbReference type="GO" id="GO:0030145">
    <property type="term" value="F:manganese ion binding"/>
    <property type="evidence" value="ECO:0007669"/>
    <property type="project" value="UniProtKB-UniRule"/>
</dbReference>
<dbReference type="GO" id="GO:0009231">
    <property type="term" value="P:riboflavin biosynthetic process"/>
    <property type="evidence" value="ECO:0007669"/>
    <property type="project" value="UniProtKB-UniRule"/>
</dbReference>
<dbReference type="FunFam" id="3.90.870.10:FF:000002">
    <property type="entry name" value="3,4-dihydroxy-2-butanone 4-phosphate synthase"/>
    <property type="match status" value="1"/>
</dbReference>
<dbReference type="Gene3D" id="3.90.870.10">
    <property type="entry name" value="DHBP synthase"/>
    <property type="match status" value="1"/>
</dbReference>
<dbReference type="HAMAP" id="MF_00180">
    <property type="entry name" value="RibB"/>
    <property type="match status" value="1"/>
</dbReference>
<dbReference type="InterPro" id="IPR017945">
    <property type="entry name" value="DHBP_synth_RibB-like_a/b_dom"/>
</dbReference>
<dbReference type="InterPro" id="IPR000422">
    <property type="entry name" value="DHBP_synthase_RibB"/>
</dbReference>
<dbReference type="NCBIfam" id="TIGR00506">
    <property type="entry name" value="ribB"/>
    <property type="match status" value="1"/>
</dbReference>
<dbReference type="PANTHER" id="PTHR21327:SF38">
    <property type="entry name" value="3,4-DIHYDROXY-2-BUTANONE 4-PHOSPHATE SYNTHASE"/>
    <property type="match status" value="1"/>
</dbReference>
<dbReference type="PANTHER" id="PTHR21327">
    <property type="entry name" value="GTP CYCLOHYDROLASE II-RELATED"/>
    <property type="match status" value="1"/>
</dbReference>
<dbReference type="Pfam" id="PF00926">
    <property type="entry name" value="DHBP_synthase"/>
    <property type="match status" value="1"/>
</dbReference>
<dbReference type="SUPFAM" id="SSF55821">
    <property type="entry name" value="YrdC/RibB"/>
    <property type="match status" value="1"/>
</dbReference>
<accession>C6D9P9</accession>
<protein>
    <recommendedName>
        <fullName evidence="1">3,4-dihydroxy-2-butanone 4-phosphate synthase</fullName>
        <shortName evidence="1">DHBP synthase</shortName>
        <ecNumber evidence="1">4.1.99.12</ecNumber>
    </recommendedName>
</protein>
<comment type="function">
    <text evidence="1">Catalyzes the conversion of D-ribulose 5-phosphate to formate and 3,4-dihydroxy-2-butanone 4-phosphate.</text>
</comment>
<comment type="catalytic activity">
    <reaction evidence="1">
        <text>D-ribulose 5-phosphate = (2S)-2-hydroxy-3-oxobutyl phosphate + formate + H(+)</text>
        <dbReference type="Rhea" id="RHEA:18457"/>
        <dbReference type="ChEBI" id="CHEBI:15378"/>
        <dbReference type="ChEBI" id="CHEBI:15740"/>
        <dbReference type="ChEBI" id="CHEBI:58121"/>
        <dbReference type="ChEBI" id="CHEBI:58830"/>
        <dbReference type="EC" id="4.1.99.12"/>
    </reaction>
</comment>
<comment type="cofactor">
    <cofactor evidence="1">
        <name>Mg(2+)</name>
        <dbReference type="ChEBI" id="CHEBI:18420"/>
    </cofactor>
    <cofactor evidence="1">
        <name>Mn(2+)</name>
        <dbReference type="ChEBI" id="CHEBI:29035"/>
    </cofactor>
    <text evidence="1">Binds 2 divalent metal cations per subunit. Magnesium or manganese.</text>
</comment>
<comment type="pathway">
    <text evidence="1">Cofactor biosynthesis; riboflavin biosynthesis; 2-hydroxy-3-oxobutyl phosphate from D-ribulose 5-phosphate: step 1/1.</text>
</comment>
<comment type="subunit">
    <text evidence="1">Homodimer.</text>
</comment>
<comment type="similarity">
    <text evidence="1">Belongs to the DHBP synthase family.</text>
</comment>
<gene>
    <name evidence="1" type="primary">ribB</name>
    <name type="ordered locus">PC1_0781</name>
</gene>
<name>RIBB_PECCP</name>
<organism>
    <name type="scientific">Pectobacterium carotovorum subsp. carotovorum (strain PC1)</name>
    <dbReference type="NCBI Taxonomy" id="561230"/>
    <lineage>
        <taxon>Bacteria</taxon>
        <taxon>Pseudomonadati</taxon>
        <taxon>Pseudomonadota</taxon>
        <taxon>Gammaproteobacteria</taxon>
        <taxon>Enterobacterales</taxon>
        <taxon>Pectobacteriaceae</taxon>
        <taxon>Pectobacterium</taxon>
    </lineage>
</organism>
<proteinExistence type="inferred from homology"/>
<sequence>MNQTLLSEFGNPAERVERALDALRHGRGVLVLDDEDRENEGDMIFSAENMTVEQMALTIRHGSGIVCLCLTEERRQQLELPMMVEKNSSHYQTAFTVTIEAAEGVTTGVSAADRLTTIRAAIADNAKPSDLNRPGHVFPLRAQPGGVLTRGGHTEATVDLMTLAGLKPSGVLCELTNDDGSMAHAPEVIAFAKQHDMPVLTIEDLVAYRVAAERKAS</sequence>
<feature type="chain" id="PRO_1000203822" description="3,4-dihydroxy-2-butanone 4-phosphate synthase">
    <location>
        <begin position="1"/>
        <end position="217"/>
    </location>
</feature>
<feature type="binding site" evidence="1">
    <location>
        <begin position="37"/>
        <end position="38"/>
    </location>
    <ligand>
        <name>D-ribulose 5-phosphate</name>
        <dbReference type="ChEBI" id="CHEBI:58121"/>
    </ligand>
</feature>
<feature type="binding site" evidence="1">
    <location>
        <position position="38"/>
    </location>
    <ligand>
        <name>Mg(2+)</name>
        <dbReference type="ChEBI" id="CHEBI:18420"/>
        <label>1</label>
    </ligand>
</feature>
<feature type="binding site" evidence="1">
    <location>
        <position position="38"/>
    </location>
    <ligand>
        <name>Mg(2+)</name>
        <dbReference type="ChEBI" id="CHEBI:18420"/>
        <label>2</label>
    </ligand>
</feature>
<feature type="binding site" evidence="1">
    <location>
        <position position="42"/>
    </location>
    <ligand>
        <name>D-ribulose 5-phosphate</name>
        <dbReference type="ChEBI" id="CHEBI:58121"/>
    </ligand>
</feature>
<feature type="binding site" evidence="1">
    <location>
        <begin position="150"/>
        <end position="154"/>
    </location>
    <ligand>
        <name>D-ribulose 5-phosphate</name>
        <dbReference type="ChEBI" id="CHEBI:58121"/>
    </ligand>
</feature>
<feature type="binding site" evidence="1">
    <location>
        <position position="153"/>
    </location>
    <ligand>
        <name>Mg(2+)</name>
        <dbReference type="ChEBI" id="CHEBI:18420"/>
        <label>2</label>
    </ligand>
</feature>
<feature type="binding site" evidence="1">
    <location>
        <position position="174"/>
    </location>
    <ligand>
        <name>D-ribulose 5-phosphate</name>
        <dbReference type="ChEBI" id="CHEBI:58121"/>
    </ligand>
</feature>
<feature type="site" description="Essential for catalytic activity" evidence="1">
    <location>
        <position position="136"/>
    </location>
</feature>
<feature type="site" description="Essential for catalytic activity" evidence="1">
    <location>
        <position position="174"/>
    </location>
</feature>
<evidence type="ECO:0000255" key="1">
    <source>
        <dbReference type="HAMAP-Rule" id="MF_00180"/>
    </source>
</evidence>
<reference key="1">
    <citation type="submission" date="2009-07" db="EMBL/GenBank/DDBJ databases">
        <title>Complete sequence of Pectobacterium carotovorum subsp. carotovorum PC1.</title>
        <authorList>
            <consortium name="US DOE Joint Genome Institute"/>
            <person name="Lucas S."/>
            <person name="Copeland A."/>
            <person name="Lapidus A."/>
            <person name="Glavina del Rio T."/>
            <person name="Tice H."/>
            <person name="Bruce D."/>
            <person name="Goodwin L."/>
            <person name="Pitluck S."/>
            <person name="Munk A.C."/>
            <person name="Brettin T."/>
            <person name="Detter J.C."/>
            <person name="Han C."/>
            <person name="Tapia R."/>
            <person name="Larimer F."/>
            <person name="Land M."/>
            <person name="Hauser L."/>
            <person name="Kyrpides N."/>
            <person name="Mikhailova N."/>
            <person name="Balakrishnan V."/>
            <person name="Glasner J."/>
            <person name="Perna N.T."/>
        </authorList>
    </citation>
    <scope>NUCLEOTIDE SEQUENCE [LARGE SCALE GENOMIC DNA]</scope>
    <source>
        <strain>PC1</strain>
    </source>
</reference>
<keyword id="KW-0456">Lyase</keyword>
<keyword id="KW-0460">Magnesium</keyword>
<keyword id="KW-0464">Manganese</keyword>
<keyword id="KW-0479">Metal-binding</keyword>
<keyword id="KW-0686">Riboflavin biosynthesis</keyword>